<name>ISPE_SALA4</name>
<keyword id="KW-0067">ATP-binding</keyword>
<keyword id="KW-0414">Isoprene biosynthesis</keyword>
<keyword id="KW-0418">Kinase</keyword>
<keyword id="KW-0547">Nucleotide-binding</keyword>
<keyword id="KW-0808">Transferase</keyword>
<gene>
    <name evidence="1" type="primary">ispE</name>
    <name type="ordered locus">SeAg_B1359</name>
</gene>
<protein>
    <recommendedName>
        <fullName evidence="1">4-diphosphocytidyl-2-C-methyl-D-erythritol kinase</fullName>
        <shortName evidence="1">CMK</shortName>
        <ecNumber evidence="1">2.7.1.148</ecNumber>
    </recommendedName>
    <alternativeName>
        <fullName evidence="1">4-(cytidine-5'-diphospho)-2-C-methyl-D-erythritol kinase</fullName>
    </alternativeName>
</protein>
<organism>
    <name type="scientific">Salmonella agona (strain SL483)</name>
    <dbReference type="NCBI Taxonomy" id="454166"/>
    <lineage>
        <taxon>Bacteria</taxon>
        <taxon>Pseudomonadati</taxon>
        <taxon>Pseudomonadota</taxon>
        <taxon>Gammaproteobacteria</taxon>
        <taxon>Enterobacterales</taxon>
        <taxon>Enterobacteriaceae</taxon>
        <taxon>Salmonella</taxon>
    </lineage>
</organism>
<evidence type="ECO:0000255" key="1">
    <source>
        <dbReference type="HAMAP-Rule" id="MF_00061"/>
    </source>
</evidence>
<feature type="chain" id="PRO_1000092110" description="4-diphosphocytidyl-2-C-methyl-D-erythritol kinase">
    <location>
        <begin position="1"/>
        <end position="282"/>
    </location>
</feature>
<feature type="active site" evidence="1">
    <location>
        <position position="9"/>
    </location>
</feature>
<feature type="active site" evidence="1">
    <location>
        <position position="140"/>
    </location>
</feature>
<feature type="binding site" evidence="1">
    <location>
        <begin position="98"/>
        <end position="108"/>
    </location>
    <ligand>
        <name>ATP</name>
        <dbReference type="ChEBI" id="CHEBI:30616"/>
    </ligand>
</feature>
<reference key="1">
    <citation type="journal article" date="2011" name="J. Bacteriol.">
        <title>Comparative genomics of 28 Salmonella enterica isolates: evidence for CRISPR-mediated adaptive sublineage evolution.</title>
        <authorList>
            <person name="Fricke W.F."/>
            <person name="Mammel M.K."/>
            <person name="McDermott P.F."/>
            <person name="Tartera C."/>
            <person name="White D.G."/>
            <person name="Leclerc J.E."/>
            <person name="Ravel J."/>
            <person name="Cebula T.A."/>
        </authorList>
    </citation>
    <scope>NUCLEOTIDE SEQUENCE [LARGE SCALE GENOMIC DNA]</scope>
    <source>
        <strain>SL483</strain>
    </source>
</reference>
<comment type="function">
    <text evidence="1">Catalyzes the phosphorylation of the position 2 hydroxy group of 4-diphosphocytidyl-2C-methyl-D-erythritol.</text>
</comment>
<comment type="catalytic activity">
    <reaction evidence="1">
        <text>4-CDP-2-C-methyl-D-erythritol + ATP = 4-CDP-2-C-methyl-D-erythritol 2-phosphate + ADP + H(+)</text>
        <dbReference type="Rhea" id="RHEA:18437"/>
        <dbReference type="ChEBI" id="CHEBI:15378"/>
        <dbReference type="ChEBI" id="CHEBI:30616"/>
        <dbReference type="ChEBI" id="CHEBI:57823"/>
        <dbReference type="ChEBI" id="CHEBI:57919"/>
        <dbReference type="ChEBI" id="CHEBI:456216"/>
        <dbReference type="EC" id="2.7.1.148"/>
    </reaction>
</comment>
<comment type="pathway">
    <text evidence="1">Isoprenoid biosynthesis; isopentenyl diphosphate biosynthesis via DXP pathway; isopentenyl diphosphate from 1-deoxy-D-xylulose 5-phosphate: step 3/6.</text>
</comment>
<comment type="subunit">
    <text evidence="1">Homodimer.</text>
</comment>
<comment type="similarity">
    <text evidence="1">Belongs to the GHMP kinase family. IspE subfamily.</text>
</comment>
<proteinExistence type="inferred from homology"/>
<sequence length="282" mass="30743">MTHWPSPAKLNLFLYITGQRADGYHTLQTLFQFLDYGDTLHIEPRRDGEIHLLTPVNGVENEDNLIVRAARLLMKAASESGRLPAGSGADISIEKRLPMGGGLGGGSSNAATVLVALNHLWQCGLSIDELATLGLTLGADVPVFVRGHAAFAEGVGEILTPVNPPEKWYLVAHPGVSIPTPVIFKDPQLPRNTPKRSIDTLLKCEFSNDCEVIARKRFREVDAALSWLLEYAPSRLTGTGACVFAEFDTESCARQVLEQAPEWLNAFVAKGVNLSPLHRELL</sequence>
<dbReference type="EC" id="2.7.1.148" evidence="1"/>
<dbReference type="EMBL" id="CP001138">
    <property type="protein sequence ID" value="ACH48463.1"/>
    <property type="molecule type" value="Genomic_DNA"/>
</dbReference>
<dbReference type="SMR" id="B5F4H2"/>
<dbReference type="KEGG" id="sea:SeAg_B1359"/>
<dbReference type="HOGENOM" id="CLU_053057_3_0_6"/>
<dbReference type="UniPathway" id="UPA00056">
    <property type="reaction ID" value="UER00094"/>
</dbReference>
<dbReference type="Proteomes" id="UP000008819">
    <property type="component" value="Chromosome"/>
</dbReference>
<dbReference type="GO" id="GO:0050515">
    <property type="term" value="F:4-(cytidine 5'-diphospho)-2-C-methyl-D-erythritol kinase activity"/>
    <property type="evidence" value="ECO:0007669"/>
    <property type="project" value="UniProtKB-UniRule"/>
</dbReference>
<dbReference type="GO" id="GO:0005524">
    <property type="term" value="F:ATP binding"/>
    <property type="evidence" value="ECO:0007669"/>
    <property type="project" value="UniProtKB-UniRule"/>
</dbReference>
<dbReference type="GO" id="GO:0019288">
    <property type="term" value="P:isopentenyl diphosphate biosynthetic process, methylerythritol 4-phosphate pathway"/>
    <property type="evidence" value="ECO:0007669"/>
    <property type="project" value="UniProtKB-UniRule"/>
</dbReference>
<dbReference type="GO" id="GO:0016114">
    <property type="term" value="P:terpenoid biosynthetic process"/>
    <property type="evidence" value="ECO:0007669"/>
    <property type="project" value="InterPro"/>
</dbReference>
<dbReference type="FunFam" id="3.30.230.10:FF:000022">
    <property type="entry name" value="4-diphosphocytidyl-2-C-methyl-D-erythritol kinase"/>
    <property type="match status" value="1"/>
</dbReference>
<dbReference type="FunFam" id="3.30.70.890:FF:000004">
    <property type="entry name" value="4-diphosphocytidyl-2-C-methyl-D-erythritol kinase"/>
    <property type="match status" value="1"/>
</dbReference>
<dbReference type="Gene3D" id="3.30.230.10">
    <property type="match status" value="1"/>
</dbReference>
<dbReference type="Gene3D" id="3.30.70.890">
    <property type="entry name" value="GHMP kinase, C-terminal domain"/>
    <property type="match status" value="1"/>
</dbReference>
<dbReference type="HAMAP" id="MF_00061">
    <property type="entry name" value="IspE"/>
    <property type="match status" value="1"/>
</dbReference>
<dbReference type="InterPro" id="IPR013750">
    <property type="entry name" value="GHMP_kinase_C_dom"/>
</dbReference>
<dbReference type="InterPro" id="IPR036554">
    <property type="entry name" value="GHMP_kinase_C_sf"/>
</dbReference>
<dbReference type="InterPro" id="IPR006204">
    <property type="entry name" value="GHMP_kinase_N_dom"/>
</dbReference>
<dbReference type="InterPro" id="IPR004424">
    <property type="entry name" value="IspE"/>
</dbReference>
<dbReference type="InterPro" id="IPR020568">
    <property type="entry name" value="Ribosomal_Su5_D2-typ_SF"/>
</dbReference>
<dbReference type="InterPro" id="IPR014721">
    <property type="entry name" value="Ribsml_uS5_D2-typ_fold_subgr"/>
</dbReference>
<dbReference type="NCBIfam" id="TIGR00154">
    <property type="entry name" value="ispE"/>
    <property type="match status" value="1"/>
</dbReference>
<dbReference type="PANTHER" id="PTHR43527">
    <property type="entry name" value="4-DIPHOSPHOCYTIDYL-2-C-METHYL-D-ERYTHRITOL KINASE, CHLOROPLASTIC"/>
    <property type="match status" value="1"/>
</dbReference>
<dbReference type="PANTHER" id="PTHR43527:SF2">
    <property type="entry name" value="4-DIPHOSPHOCYTIDYL-2-C-METHYL-D-ERYTHRITOL KINASE, CHLOROPLASTIC"/>
    <property type="match status" value="1"/>
</dbReference>
<dbReference type="Pfam" id="PF08544">
    <property type="entry name" value="GHMP_kinases_C"/>
    <property type="match status" value="1"/>
</dbReference>
<dbReference type="Pfam" id="PF00288">
    <property type="entry name" value="GHMP_kinases_N"/>
    <property type="match status" value="1"/>
</dbReference>
<dbReference type="PIRSF" id="PIRSF010376">
    <property type="entry name" value="IspE"/>
    <property type="match status" value="1"/>
</dbReference>
<dbReference type="SUPFAM" id="SSF55060">
    <property type="entry name" value="GHMP Kinase, C-terminal domain"/>
    <property type="match status" value="1"/>
</dbReference>
<dbReference type="SUPFAM" id="SSF54211">
    <property type="entry name" value="Ribosomal protein S5 domain 2-like"/>
    <property type="match status" value="1"/>
</dbReference>
<accession>B5F4H2</accession>